<evidence type="ECO:0000255" key="1">
    <source>
        <dbReference type="HAMAP-Rule" id="MF_01331"/>
    </source>
</evidence>
<evidence type="ECO:0000305" key="2"/>
<keyword id="KW-0687">Ribonucleoprotein</keyword>
<keyword id="KW-0689">Ribosomal protein</keyword>
<keyword id="KW-0694">RNA-binding</keyword>
<keyword id="KW-0699">rRNA-binding</keyword>
<protein>
    <recommendedName>
        <fullName evidence="1">Large ribosomal subunit protein uL22</fullName>
    </recommendedName>
    <alternativeName>
        <fullName evidence="2">50S ribosomal protein L22</fullName>
    </alternativeName>
</protein>
<organism>
    <name type="scientific">Dehalococcoides mccartyi (strain CBDB1)</name>
    <dbReference type="NCBI Taxonomy" id="255470"/>
    <lineage>
        <taxon>Bacteria</taxon>
        <taxon>Bacillati</taxon>
        <taxon>Chloroflexota</taxon>
        <taxon>Dehalococcoidia</taxon>
        <taxon>Dehalococcoidales</taxon>
        <taxon>Dehalococcoidaceae</taxon>
        <taxon>Dehalococcoides</taxon>
    </lineage>
</organism>
<accession>Q3ZZL9</accession>
<comment type="function">
    <text evidence="1">This protein binds specifically to 23S rRNA; its binding is stimulated by other ribosomal proteins, e.g. L4, L17, and L20. It is important during the early stages of 50S assembly. It makes multiple contacts with different domains of the 23S rRNA in the assembled 50S subunit and ribosome (By similarity).</text>
</comment>
<comment type="function">
    <text evidence="1">The globular domain of the protein is located near the polypeptide exit tunnel on the outside of the subunit, while an extended beta-hairpin is found that lines the wall of the exit tunnel in the center of the 70S ribosome.</text>
</comment>
<comment type="subunit">
    <text evidence="1">Part of the 50S ribosomal subunit.</text>
</comment>
<comment type="similarity">
    <text evidence="1">Belongs to the universal ribosomal protein uL22 family.</text>
</comment>
<name>RL22_DEHMC</name>
<sequence length="109" mass="12042">MEVKAIVKDTGYSALKVRLCVDLVRGKKVSEAITLLRFMTSPTAKVVSKVIKSAAANAENNFQMNPADLKISQIYADEARMLKRMRPQARGRVSPILKRSSHITVVVAD</sequence>
<reference key="1">
    <citation type="journal article" date="2005" name="Nat. Biotechnol.">
        <title>Genome sequence of the chlorinated compound-respiring bacterium Dehalococcoides species strain CBDB1.</title>
        <authorList>
            <person name="Kube M."/>
            <person name="Beck A."/>
            <person name="Zinder S.H."/>
            <person name="Kuhl H."/>
            <person name="Reinhardt R."/>
            <person name="Adrian L."/>
        </authorList>
    </citation>
    <scope>NUCLEOTIDE SEQUENCE [LARGE SCALE GENOMIC DNA]</scope>
    <source>
        <strain>CBDB1</strain>
    </source>
</reference>
<proteinExistence type="inferred from homology"/>
<gene>
    <name evidence="1" type="primary">rplV</name>
    <name type="ordered locus">cbdbA444</name>
</gene>
<feature type="chain" id="PRO_0000243145" description="Large ribosomal subunit protein uL22">
    <location>
        <begin position="1"/>
        <end position="109"/>
    </location>
</feature>
<dbReference type="EMBL" id="AJ965256">
    <property type="protein sequence ID" value="CAI82644.1"/>
    <property type="molecule type" value="Genomic_DNA"/>
</dbReference>
<dbReference type="RefSeq" id="WP_011309001.1">
    <property type="nucleotide sequence ID" value="NC_007356.1"/>
</dbReference>
<dbReference type="SMR" id="Q3ZZL9"/>
<dbReference type="KEGG" id="deh:cbdbA444"/>
<dbReference type="HOGENOM" id="CLU_083987_3_3_0"/>
<dbReference type="Proteomes" id="UP000000433">
    <property type="component" value="Chromosome"/>
</dbReference>
<dbReference type="GO" id="GO:0022625">
    <property type="term" value="C:cytosolic large ribosomal subunit"/>
    <property type="evidence" value="ECO:0007669"/>
    <property type="project" value="TreeGrafter"/>
</dbReference>
<dbReference type="GO" id="GO:0019843">
    <property type="term" value="F:rRNA binding"/>
    <property type="evidence" value="ECO:0007669"/>
    <property type="project" value="UniProtKB-UniRule"/>
</dbReference>
<dbReference type="GO" id="GO:0003735">
    <property type="term" value="F:structural constituent of ribosome"/>
    <property type="evidence" value="ECO:0007669"/>
    <property type="project" value="InterPro"/>
</dbReference>
<dbReference type="GO" id="GO:0006412">
    <property type="term" value="P:translation"/>
    <property type="evidence" value="ECO:0007669"/>
    <property type="project" value="UniProtKB-UniRule"/>
</dbReference>
<dbReference type="CDD" id="cd00336">
    <property type="entry name" value="Ribosomal_L22"/>
    <property type="match status" value="1"/>
</dbReference>
<dbReference type="Gene3D" id="3.90.470.10">
    <property type="entry name" value="Ribosomal protein L22/L17"/>
    <property type="match status" value="1"/>
</dbReference>
<dbReference type="HAMAP" id="MF_01331_B">
    <property type="entry name" value="Ribosomal_uL22_B"/>
    <property type="match status" value="1"/>
</dbReference>
<dbReference type="InterPro" id="IPR001063">
    <property type="entry name" value="Ribosomal_uL22"/>
</dbReference>
<dbReference type="InterPro" id="IPR005727">
    <property type="entry name" value="Ribosomal_uL22_bac/chlpt-type"/>
</dbReference>
<dbReference type="InterPro" id="IPR047867">
    <property type="entry name" value="Ribosomal_uL22_bac/org-type"/>
</dbReference>
<dbReference type="InterPro" id="IPR036394">
    <property type="entry name" value="Ribosomal_uL22_sf"/>
</dbReference>
<dbReference type="NCBIfam" id="TIGR01044">
    <property type="entry name" value="rplV_bact"/>
    <property type="match status" value="1"/>
</dbReference>
<dbReference type="PANTHER" id="PTHR13501">
    <property type="entry name" value="CHLOROPLAST 50S RIBOSOMAL PROTEIN L22-RELATED"/>
    <property type="match status" value="1"/>
</dbReference>
<dbReference type="PANTHER" id="PTHR13501:SF8">
    <property type="entry name" value="LARGE RIBOSOMAL SUBUNIT PROTEIN UL22M"/>
    <property type="match status" value="1"/>
</dbReference>
<dbReference type="Pfam" id="PF00237">
    <property type="entry name" value="Ribosomal_L22"/>
    <property type="match status" value="1"/>
</dbReference>
<dbReference type="SUPFAM" id="SSF54843">
    <property type="entry name" value="Ribosomal protein L22"/>
    <property type="match status" value="1"/>
</dbReference>